<keyword id="KW-0068">Autocatalytic cleavage</keyword>
<keyword id="KW-0227">DNA damage</keyword>
<keyword id="KW-0234">DNA repair</keyword>
<keyword id="KW-0235">DNA replication</keyword>
<keyword id="KW-0238">DNA-binding</keyword>
<keyword id="KW-0378">Hydrolase</keyword>
<keyword id="KW-1185">Reference proteome</keyword>
<keyword id="KW-0678">Repressor</keyword>
<keyword id="KW-0742">SOS response</keyword>
<keyword id="KW-0804">Transcription</keyword>
<keyword id="KW-0805">Transcription regulation</keyword>
<feature type="chain" id="PRO_0000170071" description="LexA repressor 2">
    <location>
        <begin position="1"/>
        <end position="202"/>
    </location>
</feature>
<feature type="DNA-binding region" description="H-T-H motif" evidence="1">
    <location>
        <begin position="28"/>
        <end position="48"/>
    </location>
</feature>
<feature type="active site" description="For autocatalytic cleavage activity" evidence="1">
    <location>
        <position position="123"/>
    </location>
</feature>
<feature type="active site" description="For autocatalytic cleavage activity" evidence="1">
    <location>
        <position position="160"/>
    </location>
</feature>
<feature type="site" description="Cleavage; by autolysis" evidence="1">
    <location>
        <begin position="88"/>
        <end position="89"/>
    </location>
</feature>
<evidence type="ECO:0000255" key="1">
    <source>
        <dbReference type="HAMAP-Rule" id="MF_00015"/>
    </source>
</evidence>
<proteinExistence type="inferred from homology"/>
<reference key="1">
    <citation type="journal article" date="2002" name="Environ. Microbiol.">
        <title>Complete genome sequence and comparative analysis of the metabolically versatile Pseudomonas putida KT2440.</title>
        <authorList>
            <person name="Nelson K.E."/>
            <person name="Weinel C."/>
            <person name="Paulsen I.T."/>
            <person name="Dodson R.J."/>
            <person name="Hilbert H."/>
            <person name="Martins dos Santos V.A.P."/>
            <person name="Fouts D.E."/>
            <person name="Gill S.R."/>
            <person name="Pop M."/>
            <person name="Holmes M."/>
            <person name="Brinkac L.M."/>
            <person name="Beanan M.J."/>
            <person name="DeBoy R.T."/>
            <person name="Daugherty S.C."/>
            <person name="Kolonay J.F."/>
            <person name="Madupu R."/>
            <person name="Nelson W.C."/>
            <person name="White O."/>
            <person name="Peterson J.D."/>
            <person name="Khouri H.M."/>
            <person name="Hance I."/>
            <person name="Chris Lee P."/>
            <person name="Holtzapple E.K."/>
            <person name="Scanlan D."/>
            <person name="Tran K."/>
            <person name="Moazzez A."/>
            <person name="Utterback T.R."/>
            <person name="Rizzo M."/>
            <person name="Lee K."/>
            <person name="Kosack D."/>
            <person name="Moestl D."/>
            <person name="Wedler H."/>
            <person name="Lauber J."/>
            <person name="Stjepandic D."/>
            <person name="Hoheisel J."/>
            <person name="Straetz M."/>
            <person name="Heim S."/>
            <person name="Kiewitz C."/>
            <person name="Eisen J.A."/>
            <person name="Timmis K.N."/>
            <person name="Duesterhoeft A."/>
            <person name="Tuemmler B."/>
            <person name="Fraser C.M."/>
        </authorList>
    </citation>
    <scope>NUCLEOTIDE SEQUENCE [LARGE SCALE GENOMIC DNA]</scope>
    <source>
        <strain>ATCC 47054 / DSM 6125 / CFBP 8728 / NCIMB 11950 / KT2440</strain>
    </source>
</reference>
<protein>
    <recommendedName>
        <fullName evidence="1">LexA repressor 2</fullName>
        <ecNumber evidence="1">3.4.21.88</ecNumber>
    </recommendedName>
</protein>
<organism>
    <name type="scientific">Pseudomonas putida (strain ATCC 47054 / DSM 6125 / CFBP 8728 / NCIMB 11950 / KT2440)</name>
    <dbReference type="NCBI Taxonomy" id="160488"/>
    <lineage>
        <taxon>Bacteria</taxon>
        <taxon>Pseudomonadati</taxon>
        <taxon>Pseudomonadota</taxon>
        <taxon>Gammaproteobacteria</taxon>
        <taxon>Pseudomonadales</taxon>
        <taxon>Pseudomonadaceae</taxon>
        <taxon>Pseudomonas</taxon>
    </lineage>
</organism>
<gene>
    <name evidence="1" type="primary">lexA2</name>
    <name type="synonym">lexA-2</name>
    <name type="ordered locus">PP_3116</name>
</gene>
<dbReference type="EC" id="3.4.21.88" evidence="1"/>
<dbReference type="EMBL" id="AE015451">
    <property type="protein sequence ID" value="AAN68724.1"/>
    <property type="molecule type" value="Genomic_DNA"/>
</dbReference>
<dbReference type="RefSeq" id="NP_745260.1">
    <property type="nucleotide sequence ID" value="NC_002947.4"/>
</dbReference>
<dbReference type="SMR" id="P59479"/>
<dbReference type="STRING" id="160488.PP_3116"/>
<dbReference type="MEROPS" id="S24.001"/>
<dbReference type="PaxDb" id="160488-PP_3116"/>
<dbReference type="KEGG" id="ppu:PP_3116"/>
<dbReference type="PATRIC" id="fig|160488.4.peg.3308"/>
<dbReference type="eggNOG" id="COG1974">
    <property type="taxonomic scope" value="Bacteria"/>
</dbReference>
<dbReference type="HOGENOM" id="CLU_066192_45_3_6"/>
<dbReference type="OrthoDB" id="9802364at2"/>
<dbReference type="PhylomeDB" id="P59479"/>
<dbReference type="BioCyc" id="PPUT160488:G1G01-3332-MONOMER"/>
<dbReference type="Proteomes" id="UP000000556">
    <property type="component" value="Chromosome"/>
</dbReference>
<dbReference type="CollecTF" id="EXPREG_00000b70"/>
<dbReference type="GO" id="GO:0032993">
    <property type="term" value="C:protein-DNA complex"/>
    <property type="evidence" value="ECO:0000315"/>
    <property type="project" value="CollecTF"/>
</dbReference>
<dbReference type="GO" id="GO:0001217">
    <property type="term" value="F:DNA-binding transcription repressor activity"/>
    <property type="evidence" value="ECO:0000315"/>
    <property type="project" value="CollecTF"/>
</dbReference>
<dbReference type="GO" id="GO:0004252">
    <property type="term" value="F:serine-type endopeptidase activity"/>
    <property type="evidence" value="ECO:0007669"/>
    <property type="project" value="UniProtKB-UniRule"/>
</dbReference>
<dbReference type="GO" id="GO:0000976">
    <property type="term" value="F:transcription cis-regulatory region binding"/>
    <property type="evidence" value="ECO:0000315"/>
    <property type="project" value="CollecTF"/>
</dbReference>
<dbReference type="GO" id="GO:0006281">
    <property type="term" value="P:DNA repair"/>
    <property type="evidence" value="ECO:0007669"/>
    <property type="project" value="UniProtKB-UniRule"/>
</dbReference>
<dbReference type="GO" id="GO:0006260">
    <property type="term" value="P:DNA replication"/>
    <property type="evidence" value="ECO:0007669"/>
    <property type="project" value="UniProtKB-UniRule"/>
</dbReference>
<dbReference type="GO" id="GO:0045892">
    <property type="term" value="P:negative regulation of DNA-templated transcription"/>
    <property type="evidence" value="ECO:0000269"/>
    <property type="project" value="CollecTF"/>
</dbReference>
<dbReference type="GO" id="GO:0006508">
    <property type="term" value="P:proteolysis"/>
    <property type="evidence" value="ECO:0007669"/>
    <property type="project" value="InterPro"/>
</dbReference>
<dbReference type="GO" id="GO:0009432">
    <property type="term" value="P:SOS response"/>
    <property type="evidence" value="ECO:0007669"/>
    <property type="project" value="UniProtKB-UniRule"/>
</dbReference>
<dbReference type="CDD" id="cd06529">
    <property type="entry name" value="S24_LexA-like"/>
    <property type="match status" value="1"/>
</dbReference>
<dbReference type="FunFam" id="1.10.10.10:FF:000009">
    <property type="entry name" value="LexA repressor"/>
    <property type="match status" value="1"/>
</dbReference>
<dbReference type="FunFam" id="2.10.109.10:FF:000001">
    <property type="entry name" value="LexA repressor"/>
    <property type="match status" value="1"/>
</dbReference>
<dbReference type="Gene3D" id="2.10.109.10">
    <property type="entry name" value="Umud Fragment, subunit A"/>
    <property type="match status" value="1"/>
</dbReference>
<dbReference type="Gene3D" id="1.10.10.10">
    <property type="entry name" value="Winged helix-like DNA-binding domain superfamily/Winged helix DNA-binding domain"/>
    <property type="match status" value="1"/>
</dbReference>
<dbReference type="HAMAP" id="MF_00015">
    <property type="entry name" value="LexA"/>
    <property type="match status" value="1"/>
</dbReference>
<dbReference type="InterPro" id="IPR006200">
    <property type="entry name" value="LexA"/>
</dbReference>
<dbReference type="InterPro" id="IPR039418">
    <property type="entry name" value="LexA-like"/>
</dbReference>
<dbReference type="InterPro" id="IPR036286">
    <property type="entry name" value="LexA/Signal_pep-like_sf"/>
</dbReference>
<dbReference type="InterPro" id="IPR006199">
    <property type="entry name" value="LexA_DNA-bd_dom"/>
</dbReference>
<dbReference type="InterPro" id="IPR050077">
    <property type="entry name" value="LexA_repressor"/>
</dbReference>
<dbReference type="InterPro" id="IPR006197">
    <property type="entry name" value="Peptidase_S24_LexA"/>
</dbReference>
<dbReference type="InterPro" id="IPR015927">
    <property type="entry name" value="Peptidase_S24_S26A/B/C"/>
</dbReference>
<dbReference type="InterPro" id="IPR036388">
    <property type="entry name" value="WH-like_DNA-bd_sf"/>
</dbReference>
<dbReference type="InterPro" id="IPR036390">
    <property type="entry name" value="WH_DNA-bd_sf"/>
</dbReference>
<dbReference type="NCBIfam" id="TIGR00498">
    <property type="entry name" value="lexA"/>
    <property type="match status" value="1"/>
</dbReference>
<dbReference type="PANTHER" id="PTHR33516">
    <property type="entry name" value="LEXA REPRESSOR"/>
    <property type="match status" value="1"/>
</dbReference>
<dbReference type="PANTHER" id="PTHR33516:SF2">
    <property type="entry name" value="LEXA REPRESSOR-RELATED"/>
    <property type="match status" value="1"/>
</dbReference>
<dbReference type="Pfam" id="PF01726">
    <property type="entry name" value="LexA_DNA_bind"/>
    <property type="match status" value="1"/>
</dbReference>
<dbReference type="Pfam" id="PF00717">
    <property type="entry name" value="Peptidase_S24"/>
    <property type="match status" value="1"/>
</dbReference>
<dbReference type="PRINTS" id="PR00726">
    <property type="entry name" value="LEXASERPTASE"/>
</dbReference>
<dbReference type="SUPFAM" id="SSF51306">
    <property type="entry name" value="LexA/Signal peptidase"/>
    <property type="match status" value="1"/>
</dbReference>
<dbReference type="SUPFAM" id="SSF46785">
    <property type="entry name" value="Winged helix' DNA-binding domain"/>
    <property type="match status" value="1"/>
</dbReference>
<name>LEXA2_PSEPK</name>
<comment type="function">
    <text evidence="1">Represses a number of genes involved in the response to DNA damage (SOS response), including recA and lexA. In the presence of single-stranded DNA, RecA interacts with LexA causing an autocatalytic cleavage which disrupts the DNA-binding part of LexA, leading to derepression of the SOS regulon and eventually DNA repair.</text>
</comment>
<comment type="catalytic activity">
    <reaction evidence="1">
        <text>Hydrolysis of Ala-|-Gly bond in repressor LexA.</text>
        <dbReference type="EC" id="3.4.21.88"/>
    </reaction>
</comment>
<comment type="subunit">
    <text evidence="1">Homodimer.</text>
</comment>
<comment type="similarity">
    <text evidence="1">Belongs to the peptidase S24 family.</text>
</comment>
<accession>P59479</accession>
<sequence>MDTLTPKRRAIFEFIRERIAEHGQPPSLADIATRFGFASRSVARKHITALCQAGYIDVTPNQARGIRLAEPLRRPEILEIPVLGQVAAGAPIGPDLGIHEQLLLDPSLFRRTPDYLLKVRGDSMIDDGIFDGDLVGILQQADARDGQIVVARLDGEVTIKRLQRQGGTYRLLPRNPAYAPIDVQPEQDFFIEGVFCGLLRRD</sequence>